<feature type="chain" id="PRO_0000198197" description="Ribosomal RNA large subunit methyltransferase H">
    <location>
        <begin position="1"/>
        <end position="159"/>
    </location>
</feature>
<feature type="binding site" evidence="1">
    <location>
        <position position="76"/>
    </location>
    <ligand>
        <name>S-adenosyl-L-methionine</name>
        <dbReference type="ChEBI" id="CHEBI:59789"/>
    </ligand>
</feature>
<feature type="binding site" evidence="1">
    <location>
        <position position="108"/>
    </location>
    <ligand>
        <name>S-adenosyl-L-methionine</name>
        <dbReference type="ChEBI" id="CHEBI:59789"/>
    </ligand>
</feature>
<feature type="binding site" evidence="1">
    <location>
        <begin position="127"/>
        <end position="132"/>
    </location>
    <ligand>
        <name>S-adenosyl-L-methionine</name>
        <dbReference type="ChEBI" id="CHEBI:59789"/>
    </ligand>
</feature>
<sequence length="159" mass="18082">MKVKLITVGKLKEKYLKDGIAEYIKRLGRFTKFESIELTDEKTPDNASEAENKAILDKEGQRILAKVGDRDYVIALAIEGKQFPSEQFAKELEQATLRGYSDITFIIGGSLGLSPKVKKRANQLMSFGLLTFPHQLMRLILVEQIYRAFMIQQGSPYHK</sequence>
<evidence type="ECO:0000255" key="1">
    <source>
        <dbReference type="HAMAP-Rule" id="MF_00658"/>
    </source>
</evidence>
<evidence type="ECO:0000305" key="2"/>
<keyword id="KW-0963">Cytoplasm</keyword>
<keyword id="KW-0489">Methyltransferase</keyword>
<keyword id="KW-1185">Reference proteome</keyword>
<keyword id="KW-0698">rRNA processing</keyword>
<keyword id="KW-0949">S-adenosyl-L-methionine</keyword>
<keyword id="KW-0808">Transferase</keyword>
<proteinExistence type="inferred from homology"/>
<comment type="function">
    <text evidence="1">Specifically methylates the pseudouridine at position 1915 (m3Psi1915) in 23S rRNA.</text>
</comment>
<comment type="catalytic activity">
    <reaction evidence="1">
        <text>pseudouridine(1915) in 23S rRNA + S-adenosyl-L-methionine = N(3)-methylpseudouridine(1915) in 23S rRNA + S-adenosyl-L-homocysteine + H(+)</text>
        <dbReference type="Rhea" id="RHEA:42752"/>
        <dbReference type="Rhea" id="RHEA-COMP:10221"/>
        <dbReference type="Rhea" id="RHEA-COMP:10222"/>
        <dbReference type="ChEBI" id="CHEBI:15378"/>
        <dbReference type="ChEBI" id="CHEBI:57856"/>
        <dbReference type="ChEBI" id="CHEBI:59789"/>
        <dbReference type="ChEBI" id="CHEBI:65314"/>
        <dbReference type="ChEBI" id="CHEBI:74486"/>
        <dbReference type="EC" id="2.1.1.177"/>
    </reaction>
</comment>
<comment type="subunit">
    <text evidence="1">Homodimer.</text>
</comment>
<comment type="subcellular location">
    <subcellularLocation>
        <location evidence="1">Cytoplasm</location>
    </subcellularLocation>
</comment>
<comment type="similarity">
    <text evidence="1">Belongs to the RNA methyltransferase RlmH family.</text>
</comment>
<comment type="sequence caution" evidence="2">
    <conflict type="erroneous initiation">
        <sequence resource="EMBL-CDS" id="AAV61617"/>
    </conflict>
</comment>
<name>RLMH_STRT2</name>
<accession>Q5M229</accession>
<organism>
    <name type="scientific">Streptococcus thermophilus (strain ATCC BAA-250 / LMG 18311)</name>
    <dbReference type="NCBI Taxonomy" id="264199"/>
    <lineage>
        <taxon>Bacteria</taxon>
        <taxon>Bacillati</taxon>
        <taxon>Bacillota</taxon>
        <taxon>Bacilli</taxon>
        <taxon>Lactobacillales</taxon>
        <taxon>Streptococcaceae</taxon>
        <taxon>Streptococcus</taxon>
    </lineage>
</organism>
<gene>
    <name evidence="1" type="primary">rlmH</name>
    <name type="ordered locus">stu2023</name>
</gene>
<protein>
    <recommendedName>
        <fullName evidence="1">Ribosomal RNA large subunit methyltransferase H</fullName>
        <ecNumber evidence="1">2.1.1.177</ecNumber>
    </recommendedName>
    <alternativeName>
        <fullName evidence="1">23S rRNA (pseudouridine1915-N3)-methyltransferase</fullName>
    </alternativeName>
    <alternativeName>
        <fullName evidence="1">23S rRNA m3Psi1915 methyltransferase</fullName>
    </alternativeName>
    <alternativeName>
        <fullName evidence="1">rRNA (pseudouridine-N3-)-methyltransferase RlmH</fullName>
    </alternativeName>
</protein>
<reference key="1">
    <citation type="journal article" date="2004" name="Nat. Biotechnol.">
        <title>Complete sequence and comparative genome analysis of the dairy bacterium Streptococcus thermophilus.</title>
        <authorList>
            <person name="Bolotin A."/>
            <person name="Quinquis B."/>
            <person name="Renault P."/>
            <person name="Sorokin A."/>
            <person name="Ehrlich S.D."/>
            <person name="Kulakauskas S."/>
            <person name="Lapidus A."/>
            <person name="Goltsman E."/>
            <person name="Mazur M."/>
            <person name="Pusch G.D."/>
            <person name="Fonstein M."/>
            <person name="Overbeek R."/>
            <person name="Kyprides N."/>
            <person name="Purnelle B."/>
            <person name="Prozzi D."/>
            <person name="Ngui K."/>
            <person name="Masuy D."/>
            <person name="Hancy F."/>
            <person name="Burteau S."/>
            <person name="Boutry M."/>
            <person name="Delcour J."/>
            <person name="Goffeau A."/>
            <person name="Hols P."/>
        </authorList>
    </citation>
    <scope>NUCLEOTIDE SEQUENCE [LARGE SCALE GENOMIC DNA]</scope>
    <source>
        <strain>ATCC BAA-250 / LMG 18311</strain>
    </source>
</reference>
<dbReference type="EC" id="2.1.1.177" evidence="1"/>
<dbReference type="EMBL" id="CP000023">
    <property type="protein sequence ID" value="AAV61617.1"/>
    <property type="status" value="ALT_INIT"/>
    <property type="molecule type" value="Genomic_DNA"/>
</dbReference>
<dbReference type="RefSeq" id="WP_011226712.1">
    <property type="nucleotide sequence ID" value="NC_006448.1"/>
</dbReference>
<dbReference type="SMR" id="Q5M229"/>
<dbReference type="STRING" id="264199.stu2023"/>
<dbReference type="GeneID" id="66899752"/>
<dbReference type="KEGG" id="stl:stu2023"/>
<dbReference type="PATRIC" id="fig|264199.4.peg.2008"/>
<dbReference type="eggNOG" id="COG1576">
    <property type="taxonomic scope" value="Bacteria"/>
</dbReference>
<dbReference type="HOGENOM" id="CLU_100552_0_0_9"/>
<dbReference type="Proteomes" id="UP000001170">
    <property type="component" value="Chromosome"/>
</dbReference>
<dbReference type="GO" id="GO:0005737">
    <property type="term" value="C:cytoplasm"/>
    <property type="evidence" value="ECO:0007669"/>
    <property type="project" value="UniProtKB-SubCell"/>
</dbReference>
<dbReference type="GO" id="GO:0070038">
    <property type="term" value="F:rRNA (pseudouridine-N3-)-methyltransferase activity"/>
    <property type="evidence" value="ECO:0007669"/>
    <property type="project" value="UniProtKB-UniRule"/>
</dbReference>
<dbReference type="CDD" id="cd18081">
    <property type="entry name" value="RlmH-like"/>
    <property type="match status" value="1"/>
</dbReference>
<dbReference type="Gene3D" id="3.40.1280.10">
    <property type="match status" value="1"/>
</dbReference>
<dbReference type="HAMAP" id="MF_00658">
    <property type="entry name" value="23SrRNA_methyltr_H"/>
    <property type="match status" value="1"/>
</dbReference>
<dbReference type="InterPro" id="IPR029028">
    <property type="entry name" value="Alpha/beta_knot_MTases"/>
</dbReference>
<dbReference type="InterPro" id="IPR003742">
    <property type="entry name" value="RlmH-like"/>
</dbReference>
<dbReference type="InterPro" id="IPR029026">
    <property type="entry name" value="tRNA_m1G_MTases_N"/>
</dbReference>
<dbReference type="NCBIfam" id="NF000985">
    <property type="entry name" value="PRK00103.1-3"/>
    <property type="match status" value="1"/>
</dbReference>
<dbReference type="NCBIfam" id="TIGR00246">
    <property type="entry name" value="tRNA_RlmH_YbeA"/>
    <property type="match status" value="1"/>
</dbReference>
<dbReference type="PANTHER" id="PTHR33603">
    <property type="entry name" value="METHYLTRANSFERASE"/>
    <property type="match status" value="1"/>
</dbReference>
<dbReference type="PANTHER" id="PTHR33603:SF1">
    <property type="entry name" value="RIBOSOMAL RNA LARGE SUBUNIT METHYLTRANSFERASE H"/>
    <property type="match status" value="1"/>
</dbReference>
<dbReference type="Pfam" id="PF02590">
    <property type="entry name" value="SPOUT_MTase"/>
    <property type="match status" value="1"/>
</dbReference>
<dbReference type="PIRSF" id="PIRSF004505">
    <property type="entry name" value="MT_bac"/>
    <property type="match status" value="1"/>
</dbReference>
<dbReference type="SUPFAM" id="SSF75217">
    <property type="entry name" value="alpha/beta knot"/>
    <property type="match status" value="1"/>
</dbReference>